<sequence length="507" mass="54608">MVYPFELPTTSHLSFQSALSSHTHPSLPQSATTARHALRLALKAHNRLPRGFQRDSHLTSVLSAINDYLPYVVALAQGLNNGKPIDTTTPSTTTHLEEIRVAQRAELEPEWRATLASSSLRRPSTNRTRGTGVQYELAFILTTLGYILSSLARSGVTRTLYASTTPSAEQRTAAVQTATKHLLQASTIHSFLSSSPYFATVSEAATLPDLAPATQAALSSLALAEATLLTVLKDDSYVVACIQARNPNDKDWMVRAPEIPKVRAHLFARLCIRAAEYAEQAATGLSSVAAEGRKAGVDEDVARYAHVLGLVARARACRFFGVDAELAGKVGEGIAWLRAAKGALGLRNTGSASAEEVTTKSRGLSKLKLGFRERREERKLEKGAGGERVDKGGLGPGDNAGREEEGRVLEMLETKWVRANDTLNTQLIPSSADYVANLPSGRDVLPPQPPYTPPSLDEERLFQMRGPPTELELNPGSDDGDSDFESQAAGDAHTPGAFPGRADNAYY</sequence>
<feature type="chain" id="PRO_0000218887" description="pH-response regulator protein palC">
    <location>
        <begin position="1"/>
        <end position="507"/>
    </location>
</feature>
<feature type="domain" description="BRO1" evidence="1">
    <location>
        <begin position="1"/>
        <end position="288"/>
    </location>
</feature>
<feature type="region of interest" description="Disordered" evidence="2">
    <location>
        <begin position="375"/>
        <end position="405"/>
    </location>
</feature>
<feature type="region of interest" description="Disordered" evidence="2">
    <location>
        <begin position="439"/>
        <end position="507"/>
    </location>
</feature>
<feature type="compositionally biased region" description="Basic and acidic residues" evidence="2">
    <location>
        <begin position="375"/>
        <end position="391"/>
    </location>
</feature>
<feature type="sequence conflict" description="In Ref. 1; AAF70857." evidence="4" ref="1">
    <original>EL</original>
    <variation>DV</variation>
    <location>
        <begin position="325"/>
        <end position="326"/>
    </location>
</feature>
<proteinExistence type="inferred from homology"/>
<protein>
    <recommendedName>
        <fullName>pH-response regulator protein palC</fullName>
    </recommendedName>
</protein>
<reference key="1">
    <citation type="journal article" date="1999" name="Mol. Microbiol.">
        <title>Ambient pH signal transduction in Aspergillus: completion of gene characterization.</title>
        <authorList>
            <person name="Negrete-Urtasun S."/>
            <person name="Reiter W."/>
            <person name="Diez E."/>
            <person name="Denison S.H."/>
            <person name="Tilburn J."/>
            <person name="Espeso E.A."/>
            <person name="Penalva M.A."/>
            <person name="Arst H.N. Jr."/>
        </authorList>
    </citation>
    <scope>NUCLEOTIDE SEQUENCE [GENOMIC DNA]</scope>
</reference>
<reference key="2">
    <citation type="journal article" date="2005" name="Nature">
        <title>Sequencing of Aspergillus nidulans and comparative analysis with A. fumigatus and A. oryzae.</title>
        <authorList>
            <person name="Galagan J.E."/>
            <person name="Calvo S.E."/>
            <person name="Cuomo C."/>
            <person name="Ma L.-J."/>
            <person name="Wortman J.R."/>
            <person name="Batzoglou S."/>
            <person name="Lee S.-I."/>
            <person name="Bastuerkmen M."/>
            <person name="Spevak C.C."/>
            <person name="Clutterbuck J."/>
            <person name="Kapitonov V."/>
            <person name="Jurka J."/>
            <person name="Scazzocchio C."/>
            <person name="Farman M.L."/>
            <person name="Butler J."/>
            <person name="Purcell S."/>
            <person name="Harris S."/>
            <person name="Braus G.H."/>
            <person name="Draht O."/>
            <person name="Busch S."/>
            <person name="D'Enfert C."/>
            <person name="Bouchier C."/>
            <person name="Goldman G.H."/>
            <person name="Bell-Pedersen D."/>
            <person name="Griffiths-Jones S."/>
            <person name="Doonan J.H."/>
            <person name="Yu J."/>
            <person name="Vienken K."/>
            <person name="Pain A."/>
            <person name="Freitag M."/>
            <person name="Selker E.U."/>
            <person name="Archer D.B."/>
            <person name="Penalva M.A."/>
            <person name="Oakley B.R."/>
            <person name="Momany M."/>
            <person name="Tanaka T."/>
            <person name="Kumagai T."/>
            <person name="Asai K."/>
            <person name="Machida M."/>
            <person name="Nierman W.C."/>
            <person name="Denning D.W."/>
            <person name="Caddick M.X."/>
            <person name="Hynes M."/>
            <person name="Paoletti M."/>
            <person name="Fischer R."/>
            <person name="Miller B.L."/>
            <person name="Dyer P.S."/>
            <person name="Sachs M.S."/>
            <person name="Osmani S.A."/>
            <person name="Birren B.W."/>
        </authorList>
    </citation>
    <scope>NUCLEOTIDE SEQUENCE [LARGE SCALE GENOMIC DNA]</scope>
    <source>
        <strain>FGSC A4 / ATCC 38163 / CBS 112.46 / NRRL 194 / M139</strain>
    </source>
</reference>
<reference key="3">
    <citation type="journal article" date="2009" name="Fungal Genet. Biol.">
        <title>The 2008 update of the Aspergillus nidulans genome annotation: a community effort.</title>
        <authorList>
            <person name="Wortman J.R."/>
            <person name="Gilsenan J.M."/>
            <person name="Joardar V."/>
            <person name="Deegan J."/>
            <person name="Clutterbuck J."/>
            <person name="Andersen M.R."/>
            <person name="Archer D."/>
            <person name="Bencina M."/>
            <person name="Braus G."/>
            <person name="Coutinho P."/>
            <person name="von Dohren H."/>
            <person name="Doonan J."/>
            <person name="Driessen A.J."/>
            <person name="Durek P."/>
            <person name="Espeso E."/>
            <person name="Fekete E."/>
            <person name="Flipphi M."/>
            <person name="Estrada C.G."/>
            <person name="Geysens S."/>
            <person name="Goldman G."/>
            <person name="de Groot P.W."/>
            <person name="Hansen K."/>
            <person name="Harris S.D."/>
            <person name="Heinekamp T."/>
            <person name="Helmstaedt K."/>
            <person name="Henrissat B."/>
            <person name="Hofmann G."/>
            <person name="Homan T."/>
            <person name="Horio T."/>
            <person name="Horiuchi H."/>
            <person name="James S."/>
            <person name="Jones M."/>
            <person name="Karaffa L."/>
            <person name="Karanyi Z."/>
            <person name="Kato M."/>
            <person name="Keller N."/>
            <person name="Kelly D.E."/>
            <person name="Kiel J.A."/>
            <person name="Kim J.M."/>
            <person name="van der Klei I.J."/>
            <person name="Klis F.M."/>
            <person name="Kovalchuk A."/>
            <person name="Krasevec N."/>
            <person name="Kubicek C.P."/>
            <person name="Liu B."/>
            <person name="Maccabe A."/>
            <person name="Meyer V."/>
            <person name="Mirabito P."/>
            <person name="Miskei M."/>
            <person name="Mos M."/>
            <person name="Mullins J."/>
            <person name="Nelson D.R."/>
            <person name="Nielsen J."/>
            <person name="Oakley B.R."/>
            <person name="Osmani S.A."/>
            <person name="Pakula T."/>
            <person name="Paszewski A."/>
            <person name="Paulsen I."/>
            <person name="Pilsyk S."/>
            <person name="Pocsi I."/>
            <person name="Punt P.J."/>
            <person name="Ram A.F."/>
            <person name="Ren Q."/>
            <person name="Robellet X."/>
            <person name="Robson G."/>
            <person name="Seiboth B."/>
            <person name="van Solingen P."/>
            <person name="Specht T."/>
            <person name="Sun J."/>
            <person name="Taheri-Talesh N."/>
            <person name="Takeshita N."/>
            <person name="Ussery D."/>
            <person name="vanKuyk P.A."/>
            <person name="Visser H."/>
            <person name="van de Vondervoort P.J."/>
            <person name="de Vries R.P."/>
            <person name="Walton J."/>
            <person name="Xiang X."/>
            <person name="Xiong Y."/>
            <person name="Zeng A.P."/>
            <person name="Brandt B.W."/>
            <person name="Cornell M.J."/>
            <person name="van den Hondel C.A."/>
            <person name="Visser J."/>
            <person name="Oliver S.G."/>
            <person name="Turner G."/>
        </authorList>
    </citation>
    <scope>GENOME REANNOTATION</scope>
    <source>
        <strain>FGSC A4 / ATCC 38163 / CBS 112.46 / NRRL 194 / M139</strain>
    </source>
</reference>
<reference key="4">
    <citation type="journal article" date="1986" name="Mol. Gen. Genet.">
        <title>Regulation of gene expression by pH of the growth medium in Aspergillus nidulans.</title>
        <authorList>
            <person name="Caddick M.X."/>
            <person name="Brownlee A.G."/>
            <person name="Arst H.N. Jr."/>
        </authorList>
    </citation>
    <scope>FUNCTION</scope>
</reference>
<keyword id="KW-1185">Reference proteome</keyword>
<dbReference type="EMBL" id="AF152925">
    <property type="protein sequence ID" value="AAF70857.1"/>
    <property type="molecule type" value="Genomic_DNA"/>
</dbReference>
<dbReference type="EMBL" id="AACD01000129">
    <property type="protein sequence ID" value="EAA62140.1"/>
    <property type="molecule type" value="Genomic_DNA"/>
</dbReference>
<dbReference type="EMBL" id="BN001304">
    <property type="protein sequence ID" value="CBF79630.1"/>
    <property type="molecule type" value="Genomic_DNA"/>
</dbReference>
<dbReference type="RefSeq" id="XP_680829.1">
    <property type="nucleotide sequence ID" value="XM_675737.1"/>
</dbReference>
<dbReference type="STRING" id="227321.Q9P905"/>
<dbReference type="EnsemblFungi" id="CBF79630">
    <property type="protein sequence ID" value="CBF79630"/>
    <property type="gene ID" value="ANIA_07560"/>
</dbReference>
<dbReference type="KEGG" id="ani:ANIA_07560"/>
<dbReference type="VEuPathDB" id="FungiDB:AN7560"/>
<dbReference type="eggNOG" id="ENOG502QWTM">
    <property type="taxonomic scope" value="Eukaryota"/>
</dbReference>
<dbReference type="HOGENOM" id="CLU_023703_0_0_1"/>
<dbReference type="InParanoid" id="Q9P905"/>
<dbReference type="OMA" id="PNDKEWM"/>
<dbReference type="OrthoDB" id="10266451at2759"/>
<dbReference type="Proteomes" id="UP000000560">
    <property type="component" value="Chromosome IV"/>
</dbReference>
<dbReference type="GO" id="GO:0000815">
    <property type="term" value="C:ESCRT III complex"/>
    <property type="evidence" value="ECO:0000315"/>
    <property type="project" value="AspGD"/>
</dbReference>
<dbReference type="GO" id="GO:0005886">
    <property type="term" value="C:plasma membrane"/>
    <property type="evidence" value="ECO:0000314"/>
    <property type="project" value="AspGD"/>
</dbReference>
<dbReference type="GO" id="GO:0071467">
    <property type="term" value="P:cellular response to pH"/>
    <property type="evidence" value="ECO:0000315"/>
    <property type="project" value="AspGD"/>
</dbReference>
<dbReference type="GO" id="GO:0042318">
    <property type="term" value="P:penicillin biosynthetic process"/>
    <property type="evidence" value="ECO:0000315"/>
    <property type="project" value="AspGD"/>
</dbReference>
<dbReference type="GO" id="GO:1900198">
    <property type="term" value="P:positive regulation of penicillin biosynthetic process"/>
    <property type="evidence" value="ECO:0000315"/>
    <property type="project" value="AspGD"/>
</dbReference>
<dbReference type="GO" id="GO:1900376">
    <property type="term" value="P:regulation of secondary metabolite biosynthetic process"/>
    <property type="evidence" value="ECO:0000315"/>
    <property type="project" value="AspGD"/>
</dbReference>
<dbReference type="CDD" id="cd09245">
    <property type="entry name" value="BRO1_UmRIM23-like"/>
    <property type="match status" value="1"/>
</dbReference>
<dbReference type="FunFam" id="1.25.40.280:FF:000005">
    <property type="entry name" value="pH-response regulator protein palC"/>
    <property type="match status" value="1"/>
</dbReference>
<dbReference type="Gene3D" id="1.25.40.280">
    <property type="entry name" value="alix/aip1 like domains"/>
    <property type="match status" value="1"/>
</dbReference>
<dbReference type="InterPro" id="IPR004328">
    <property type="entry name" value="BRO1_dom"/>
</dbReference>
<dbReference type="InterPro" id="IPR038499">
    <property type="entry name" value="BRO1_sf"/>
</dbReference>
<dbReference type="InterPro" id="IPR037505">
    <property type="entry name" value="pH-resp_palC"/>
</dbReference>
<dbReference type="PANTHER" id="PTHR40463">
    <property type="entry name" value="PH-RESPONSE REGULATOR PROTEIN PALC"/>
    <property type="match status" value="1"/>
</dbReference>
<dbReference type="PANTHER" id="PTHR40463:SF1">
    <property type="entry name" value="PH-RESPONSE REGULATOR PROTEIN PALC"/>
    <property type="match status" value="1"/>
</dbReference>
<dbReference type="Pfam" id="PF03097">
    <property type="entry name" value="BRO1"/>
    <property type="match status" value="1"/>
</dbReference>
<dbReference type="SMART" id="SM01041">
    <property type="entry name" value="BRO1"/>
    <property type="match status" value="1"/>
</dbReference>
<dbReference type="PROSITE" id="PS51180">
    <property type="entry name" value="BRO1"/>
    <property type="match status" value="1"/>
</dbReference>
<comment type="function">
    <text evidence="3">Required for the proteolytic cleavage of the transcription factor pacC in response to alkaline ambient pH.</text>
</comment>
<comment type="similarity">
    <text evidence="4">Belongs to the palC family.</text>
</comment>
<evidence type="ECO:0000255" key="1">
    <source>
        <dbReference type="PROSITE-ProRule" id="PRU00526"/>
    </source>
</evidence>
<evidence type="ECO:0000256" key="2">
    <source>
        <dbReference type="SAM" id="MobiDB-lite"/>
    </source>
</evidence>
<evidence type="ECO:0000269" key="3">
    <source>
    </source>
</evidence>
<evidence type="ECO:0000305" key="4"/>
<accession>Q9P905</accession>
<accession>C8VBP6</accession>
<accession>Q5AVX0</accession>
<gene>
    <name type="primary">palC</name>
    <name type="ORF">AN7560</name>
</gene>
<name>PALC_EMENI</name>
<organism>
    <name type="scientific">Emericella nidulans (strain FGSC A4 / ATCC 38163 / CBS 112.46 / NRRL 194 / M139)</name>
    <name type="common">Aspergillus nidulans</name>
    <dbReference type="NCBI Taxonomy" id="227321"/>
    <lineage>
        <taxon>Eukaryota</taxon>
        <taxon>Fungi</taxon>
        <taxon>Dikarya</taxon>
        <taxon>Ascomycota</taxon>
        <taxon>Pezizomycotina</taxon>
        <taxon>Eurotiomycetes</taxon>
        <taxon>Eurotiomycetidae</taxon>
        <taxon>Eurotiales</taxon>
        <taxon>Aspergillaceae</taxon>
        <taxon>Aspergillus</taxon>
        <taxon>Aspergillus subgen. Nidulantes</taxon>
    </lineage>
</organism>